<organism>
    <name type="scientific">Pseudoalteromonas atlantica (strain T6c / ATCC BAA-1087)</name>
    <dbReference type="NCBI Taxonomy" id="3042615"/>
    <lineage>
        <taxon>Bacteria</taxon>
        <taxon>Pseudomonadati</taxon>
        <taxon>Pseudomonadota</taxon>
        <taxon>Gammaproteobacteria</taxon>
        <taxon>Alteromonadales</taxon>
        <taxon>Alteromonadaceae</taxon>
        <taxon>Paraglaciecola</taxon>
    </lineage>
</organism>
<feature type="chain" id="PRO_1000021216" description="Recombination-associated protein RdgC">
    <location>
        <begin position="1"/>
        <end position="301"/>
    </location>
</feature>
<gene>
    <name evidence="1" type="primary">rdgC</name>
    <name type="ordered locus">Patl_1051</name>
</gene>
<comment type="function">
    <text evidence="1">May be involved in recombination.</text>
</comment>
<comment type="subcellular location">
    <subcellularLocation>
        <location evidence="1">Cytoplasm</location>
        <location evidence="1">Nucleoid</location>
    </subcellularLocation>
</comment>
<comment type="similarity">
    <text evidence="1">Belongs to the RdgC family.</text>
</comment>
<reference key="1">
    <citation type="submission" date="2006-06" db="EMBL/GenBank/DDBJ databases">
        <title>Complete sequence of Pseudoalteromonas atlantica T6c.</title>
        <authorList>
            <consortium name="US DOE Joint Genome Institute"/>
            <person name="Copeland A."/>
            <person name="Lucas S."/>
            <person name="Lapidus A."/>
            <person name="Barry K."/>
            <person name="Detter J.C."/>
            <person name="Glavina del Rio T."/>
            <person name="Hammon N."/>
            <person name="Israni S."/>
            <person name="Dalin E."/>
            <person name="Tice H."/>
            <person name="Pitluck S."/>
            <person name="Saunders E."/>
            <person name="Brettin T."/>
            <person name="Bruce D."/>
            <person name="Han C."/>
            <person name="Tapia R."/>
            <person name="Gilna P."/>
            <person name="Schmutz J."/>
            <person name="Larimer F."/>
            <person name="Land M."/>
            <person name="Hauser L."/>
            <person name="Kyrpides N."/>
            <person name="Kim E."/>
            <person name="Karls A.C."/>
            <person name="Bartlett D."/>
            <person name="Higgins B.P."/>
            <person name="Richardson P."/>
        </authorList>
    </citation>
    <scope>NUCLEOTIDE SEQUENCE [LARGE SCALE GENOMIC DNA]</scope>
    <source>
        <strain>T6c / ATCC BAA-1087</strain>
    </source>
</reference>
<dbReference type="EMBL" id="CP000388">
    <property type="protein sequence ID" value="ABG39577.1"/>
    <property type="molecule type" value="Genomic_DNA"/>
</dbReference>
<dbReference type="RefSeq" id="WP_006991309.1">
    <property type="nucleotide sequence ID" value="NC_008228.1"/>
</dbReference>
<dbReference type="SMR" id="Q15X11"/>
<dbReference type="STRING" id="342610.Patl_1051"/>
<dbReference type="KEGG" id="pat:Patl_1051"/>
<dbReference type="eggNOG" id="COG2974">
    <property type="taxonomic scope" value="Bacteria"/>
</dbReference>
<dbReference type="HOGENOM" id="CLU_052038_1_1_6"/>
<dbReference type="OrthoDB" id="5290530at2"/>
<dbReference type="Proteomes" id="UP000001981">
    <property type="component" value="Chromosome"/>
</dbReference>
<dbReference type="GO" id="GO:0043590">
    <property type="term" value="C:bacterial nucleoid"/>
    <property type="evidence" value="ECO:0007669"/>
    <property type="project" value="TreeGrafter"/>
</dbReference>
<dbReference type="GO" id="GO:0005737">
    <property type="term" value="C:cytoplasm"/>
    <property type="evidence" value="ECO:0007669"/>
    <property type="project" value="UniProtKB-UniRule"/>
</dbReference>
<dbReference type="GO" id="GO:0003690">
    <property type="term" value="F:double-stranded DNA binding"/>
    <property type="evidence" value="ECO:0007669"/>
    <property type="project" value="TreeGrafter"/>
</dbReference>
<dbReference type="GO" id="GO:0006310">
    <property type="term" value="P:DNA recombination"/>
    <property type="evidence" value="ECO:0007669"/>
    <property type="project" value="UniProtKB-UniRule"/>
</dbReference>
<dbReference type="GO" id="GO:0000018">
    <property type="term" value="P:regulation of DNA recombination"/>
    <property type="evidence" value="ECO:0007669"/>
    <property type="project" value="TreeGrafter"/>
</dbReference>
<dbReference type="HAMAP" id="MF_00194">
    <property type="entry name" value="RdgC"/>
    <property type="match status" value="1"/>
</dbReference>
<dbReference type="InterPro" id="IPR007476">
    <property type="entry name" value="RdgC"/>
</dbReference>
<dbReference type="NCBIfam" id="NF001462">
    <property type="entry name" value="PRK00321.1-3"/>
    <property type="match status" value="1"/>
</dbReference>
<dbReference type="NCBIfam" id="NF001464">
    <property type="entry name" value="PRK00321.1-5"/>
    <property type="match status" value="1"/>
</dbReference>
<dbReference type="PANTHER" id="PTHR38103">
    <property type="entry name" value="RECOMBINATION-ASSOCIATED PROTEIN RDGC"/>
    <property type="match status" value="1"/>
</dbReference>
<dbReference type="PANTHER" id="PTHR38103:SF1">
    <property type="entry name" value="RECOMBINATION-ASSOCIATED PROTEIN RDGC"/>
    <property type="match status" value="1"/>
</dbReference>
<dbReference type="Pfam" id="PF04381">
    <property type="entry name" value="RdgC"/>
    <property type="match status" value="1"/>
</dbReference>
<protein>
    <recommendedName>
        <fullName evidence="1">Recombination-associated protein RdgC</fullName>
    </recommendedName>
</protein>
<name>RDGC_PSEA6</name>
<keyword id="KW-0963">Cytoplasm</keyword>
<keyword id="KW-0233">DNA recombination</keyword>
<evidence type="ECO:0000255" key="1">
    <source>
        <dbReference type="HAMAP-Rule" id="MF_00194"/>
    </source>
</evidence>
<proteinExistence type="inferred from homology"/>
<sequence>MWFKNLKLYHLTQTLDLTEEDIQDKLAEFPFRPCGSQELATMGWTSPVGQGDMLVHSAGGKFWLTLKKQERILPAAVVNAELADKVALMEAETGSNVGKKAQQEMKEEIIQRLLPQAFTKNSFSHGFISTQDNLVVVDASADGKAETFLAMLRKAIGSLPVVPLAKQSVQEELTHWLTDDSVPNDVVILEEAELRSMEEDGAIVRCKNQDLGSEEIANHLSAGKTVQKIAIEWDETFSALLQEDMAVKRLKFTDVMTEQNDDIPKEDKLAKMDADFALMSAEIVRFSKRLVEIFNLQQDQE</sequence>
<accession>Q15X11</accession>